<feature type="chain" id="PRO_0000436526" description="Coilin" evidence="6">
    <location>
        <begin position="1"/>
        <end position="634"/>
    </location>
</feature>
<feature type="region of interest" description="Disordered" evidence="1">
    <location>
        <begin position="87"/>
        <end position="135"/>
    </location>
</feature>
<feature type="region of interest" description="Disordered" evidence="1">
    <location>
        <begin position="149"/>
        <end position="276"/>
    </location>
</feature>
<feature type="region of interest" description="Disordered" evidence="1">
    <location>
        <begin position="342"/>
        <end position="361"/>
    </location>
</feature>
<feature type="compositionally biased region" description="Polar residues" evidence="1">
    <location>
        <begin position="152"/>
        <end position="181"/>
    </location>
</feature>
<feature type="compositionally biased region" description="Basic and acidic residues" evidence="1">
    <location>
        <begin position="223"/>
        <end position="234"/>
    </location>
</feature>
<feature type="compositionally biased region" description="Basic and acidic residues" evidence="1">
    <location>
        <begin position="251"/>
        <end position="272"/>
    </location>
</feature>
<feature type="splice variant" id="VSP_058383" description="In isoform C." evidence="6">
    <location>
        <begin position="1"/>
        <end position="146"/>
    </location>
</feature>
<feature type="sequence conflict" description="In Ref. 3; AAM50550/AAL28426." evidence="6" ref="3">
    <original>R</original>
    <variation>T</variation>
    <location>
        <position position="389"/>
    </location>
</feature>
<protein>
    <recommendedName>
        <fullName evidence="10">Coilin</fullName>
    </recommendedName>
</protein>
<dbReference type="EMBL" id="AE013599">
    <property type="protein sequence ID" value="AAX52725.1"/>
    <property type="molecule type" value="Genomic_DNA"/>
</dbReference>
<dbReference type="EMBL" id="AE013599">
    <property type="protein sequence ID" value="AAX52726.1"/>
    <property type="molecule type" value="Genomic_DNA"/>
</dbReference>
<dbReference type="EMBL" id="AY060878">
    <property type="protein sequence ID" value="AAL28426.1"/>
    <property type="molecule type" value="mRNA"/>
</dbReference>
<dbReference type="EMBL" id="AY118690">
    <property type="protein sequence ID" value="AAM50550.1"/>
    <property type="molecule type" value="mRNA"/>
</dbReference>
<dbReference type="EMBL" id="BT050478">
    <property type="protein sequence ID" value="ACJ13185.1"/>
    <property type="molecule type" value="mRNA"/>
</dbReference>
<dbReference type="RefSeq" id="NP_001014505.1">
    <molecule id="A1Z7A8-1"/>
    <property type="nucleotide sequence ID" value="NM_001014505.2"/>
</dbReference>
<dbReference type="RefSeq" id="NP_001014506.1">
    <property type="nucleotide sequence ID" value="NM_001014506.3"/>
</dbReference>
<dbReference type="FunCoup" id="A1Z7A8">
    <property type="interactions" value="13"/>
</dbReference>
<dbReference type="IntAct" id="A1Z7A8">
    <property type="interactions" value="6"/>
</dbReference>
<dbReference type="STRING" id="7227.FBpp0100132"/>
<dbReference type="PaxDb" id="7227-FBpp0100132"/>
<dbReference type="DNASU" id="35785"/>
<dbReference type="EnsemblMetazoa" id="FBtr0100668">
    <molecule id="A1Z7A8-1"/>
    <property type="protein sequence ID" value="FBpp0100132"/>
    <property type="gene ID" value="FBgn0033265"/>
</dbReference>
<dbReference type="GeneID" id="35785"/>
<dbReference type="KEGG" id="dme:Dmel_CG8710"/>
<dbReference type="UCSC" id="CG8710-RC">
    <property type="organism name" value="d. melanogaster"/>
</dbReference>
<dbReference type="UCSC" id="CG8710-RD">
    <molecule id="A1Z7A8-1"/>
    <property type="organism name" value="d. melanogaster"/>
</dbReference>
<dbReference type="AGR" id="FB:FBgn0033265"/>
<dbReference type="CTD" id="8161"/>
<dbReference type="FlyBase" id="FBgn0033265">
    <property type="gene designation" value="coil"/>
</dbReference>
<dbReference type="VEuPathDB" id="VectorBase:FBgn0033265"/>
<dbReference type="eggNOG" id="ENOG502SF1H">
    <property type="taxonomic scope" value="Eukaryota"/>
</dbReference>
<dbReference type="HOGENOM" id="CLU_039345_0_0_1"/>
<dbReference type="InParanoid" id="A1Z7A8"/>
<dbReference type="OMA" id="IKDVQDH"/>
<dbReference type="OrthoDB" id="74813at2759"/>
<dbReference type="PhylomeDB" id="A1Z7A8"/>
<dbReference type="SignaLink" id="A1Z7A8"/>
<dbReference type="BioGRID-ORCS" id="35785">
    <property type="hits" value="0 hits in 1 CRISPR screen"/>
</dbReference>
<dbReference type="CD-CODE" id="21DC7D43">
    <property type="entry name" value="Cajal body"/>
</dbReference>
<dbReference type="GenomeRNAi" id="35785"/>
<dbReference type="PRO" id="PR:A1Z7A8"/>
<dbReference type="Proteomes" id="UP000000803">
    <property type="component" value="Chromosome 2R"/>
</dbReference>
<dbReference type="Bgee" id="FBgn0033265">
    <property type="expression patterns" value="Expressed in spermatocyte in testis and 84 other cell types or tissues"/>
</dbReference>
<dbReference type="ExpressionAtlas" id="A1Z7A8">
    <property type="expression patterns" value="baseline and differential"/>
</dbReference>
<dbReference type="GO" id="GO:0015030">
    <property type="term" value="C:Cajal body"/>
    <property type="evidence" value="ECO:0000314"/>
    <property type="project" value="FlyBase"/>
</dbReference>
<dbReference type="GO" id="GO:0000775">
    <property type="term" value="C:chromosome, centromeric region"/>
    <property type="evidence" value="ECO:0007669"/>
    <property type="project" value="UniProtKB-SubCell"/>
</dbReference>
<dbReference type="GO" id="GO:0005737">
    <property type="term" value="C:cytoplasm"/>
    <property type="evidence" value="ECO:0007669"/>
    <property type="project" value="UniProtKB-SubCell"/>
</dbReference>
<dbReference type="GO" id="GO:0035363">
    <property type="term" value="C:histone locus body"/>
    <property type="evidence" value="ECO:0000314"/>
    <property type="project" value="FlyBase"/>
</dbReference>
<dbReference type="GO" id="GO:0005654">
    <property type="term" value="C:nucleoplasm"/>
    <property type="evidence" value="ECO:0000314"/>
    <property type="project" value="FlyBase"/>
</dbReference>
<dbReference type="GO" id="GO:0005819">
    <property type="term" value="C:spindle"/>
    <property type="evidence" value="ECO:0007669"/>
    <property type="project" value="UniProtKB-SubCell"/>
</dbReference>
<dbReference type="GO" id="GO:0140693">
    <property type="term" value="F:molecular condensate scaffold activity"/>
    <property type="evidence" value="ECO:0000314"/>
    <property type="project" value="FlyBase"/>
</dbReference>
<dbReference type="GO" id="GO:0030576">
    <property type="term" value="P:Cajal body organization"/>
    <property type="evidence" value="ECO:0000315"/>
    <property type="project" value="FlyBase"/>
</dbReference>
<dbReference type="GO" id="GO:0140694">
    <property type="term" value="P:membraneless organelle assembly"/>
    <property type="evidence" value="ECO:0000314"/>
    <property type="project" value="FlyBase"/>
</dbReference>
<dbReference type="InterPro" id="IPR031722">
    <property type="entry name" value="Coilin_N"/>
</dbReference>
<dbReference type="Pfam" id="PF15862">
    <property type="entry name" value="Coilin_N"/>
    <property type="match status" value="1"/>
</dbReference>
<keyword id="KW-0025">Alternative splicing</keyword>
<keyword id="KW-0137">Centromere</keyword>
<keyword id="KW-0158">Chromosome</keyword>
<keyword id="KW-0963">Cytoplasm</keyword>
<keyword id="KW-0206">Cytoskeleton</keyword>
<keyword id="KW-0539">Nucleus</keyword>
<keyword id="KW-1185">Reference proteome</keyword>
<organism evidence="11">
    <name type="scientific">Drosophila melanogaster</name>
    <name type="common">Fruit fly</name>
    <dbReference type="NCBI Taxonomy" id="7227"/>
    <lineage>
        <taxon>Eukaryota</taxon>
        <taxon>Metazoa</taxon>
        <taxon>Ecdysozoa</taxon>
        <taxon>Arthropoda</taxon>
        <taxon>Hexapoda</taxon>
        <taxon>Insecta</taxon>
        <taxon>Pterygota</taxon>
        <taxon>Neoptera</taxon>
        <taxon>Endopterygota</taxon>
        <taxon>Diptera</taxon>
        <taxon>Brachycera</taxon>
        <taxon>Muscomorpha</taxon>
        <taxon>Ephydroidea</taxon>
        <taxon>Drosophilidae</taxon>
        <taxon>Drosophila</taxon>
        <taxon>Sophophora</taxon>
    </lineage>
</organism>
<comment type="function">
    <text evidence="2 3">Component of nuclear coiled bodies, also known as Cajal bodies or CBs, which are involved in the modification and assembly of nucleoplasmic snRNPs (PubMed:19846657). Required for Cajal body formation (PubMed:19158395, PubMed:19846657).</text>
</comment>
<comment type="subcellular location">
    <subcellularLocation>
        <location evidence="2">Nucleus</location>
    </subcellularLocation>
    <subcellularLocation>
        <location evidence="2">Nucleus</location>
        <location evidence="2">Nucleoplasm</location>
    </subcellularLocation>
    <subcellularLocation>
        <location evidence="2 4">Nucleus</location>
        <location evidence="2 4">Cajal body</location>
    </subcellularLocation>
    <subcellularLocation>
        <location evidence="2">Chromosome</location>
        <location evidence="2">Centromere</location>
    </subcellularLocation>
    <subcellularLocation>
        <location evidence="2">Cytoplasm</location>
        <location evidence="2">Cytoskeleton</location>
        <location evidence="2">Spindle</location>
    </subcellularLocation>
    <text evidence="2">Detected in the CBs of cells from a number of different larval and adult tissues. In stage 8-9 oocytes detected only in the single CB of the germinal vesicle. Also detected in the histone locus bodies (HLBs) of late stage nurse cells, and low expression in the HLBs of large polytene or polyploid nuclei within the salivary glands, fat bodies and Malpighian tubule cells. In germline stem cells and cystocytes (where CBs are not evident), expressed throughout the nucleoplasm. During interphase localized to foci scattered throughout the nucleoplasm. During metaphase (in meiotic and mitotic cells) these foci localize to the centromere regions on the metaphase plate. At anaphase, no longer detected as foci and is instead detected throughout the spindle. When the nucleus reforms, it localizes to multiple nuclear foci and throughout the nucleoplasm.</text>
</comment>
<comment type="subcellular location">
    <molecule>Isoform C</molecule>
    <subcellularLocation>
        <location evidence="2">Cytoplasm</location>
    </subcellularLocation>
    <text evidence="2">Very low expression and not detected at the protein level. Relatively higher levels of expression in the cytoplasm of follicle cells that have no expression of Isoform D in their CBs.</text>
</comment>
<comment type="alternative products">
    <event type="alternative splicing"/>
    <isoform>
        <id>A1Z7A8-1</id>
        <name evidence="10">D</name>
        <name evidence="5">long</name>
        <sequence type="displayed"/>
    </isoform>
    <isoform>
        <id>A1Z7A8-2</id>
        <name evidence="10">C</name>
        <name evidence="5">short</name>
        <sequence type="described" ref="VSP_058383"/>
    </isoform>
</comment>
<comment type="tissue specificity">
    <text evidence="2">In egg chambers expressed in the follicle cells, nurse cells and oocyte. Expressed in the larval brain, salivary glands, fat bodies and in the somatic hub cells at the tip of the testis. Expressed in the spermatogonia and spermatocytes, and in the adult ejaculatory duct (at protein level). Expressed in the adult Malpighian tubules.</text>
</comment>
<comment type="disruption phenotype">
    <text evidence="2 3">Viable and fertile with no obvious phenotype (PubMed:19158395). Loss of Cajal bodies (CBs) in the nurse cells, spermatocytes, ejaculatory ducts (PubMed:19158395). Loss of CBs in the adult Malpighian tubule cells (PubMed:19158395, PubMed:19846657). Histone locus bodies (HLBs) in the same cell types are present and not affected (PubMed:19158395). In stage 8-9 oocytes, the single CB present in the germinal vesicle is unaffected (PubMed:19158395).</text>
</comment>
<comment type="similarity">
    <text evidence="6">Belongs to the coilin family.</text>
</comment>
<sequence length="634" mass="70558">MQHSSMKVDLSNFFKDERRNSLVFIDAAWNNIKDLQDHIQNLFSLKDISLLTSDGCYLPPRESIKVLNSAEGLKAFRFASHDSDTFVSPAPVKSSKKRKNRSVEEQVHLTASTPLRPSKRSKNQNNSEWINIAENPSRVRKKELLDMAPGPSVQSKLLTNKGTPKAPETQTEVSNMSANIETENKESAPQIKNKSKNKKPTKSPEASDQVENEPAPKSISRCTLKEGKMSESKNQETSPDILSEKSGVVTKENETREEQQDKTHLESNKIPDKLSQLKAGDQIEKSPGIAASLLSISFRSPLLEMPFNVPRIFQFPTKKQQIEILEYKKLKPISPRFLLQKGAKSDDTAKQFPSNGKDSTLKPKSYEILHDEELPDVKDKKNVSEGIKRAVAPLCEDIIETSTTLPGAIGAVESAYLDNSTEAETTLPSEAEATNPLELTESFLQNNTSMEKTPKVEKILPDDGSASPIKNNVDSKDVKTVTVPIFEEQLVSDSDDDVMLVDDSNIDVSYGDSDIEPIPVVENRQSLDIIRDLLRTATPLNSLPSRGDTVIFKLLKIKGNANSGTTEFVAGRCTYVNRRTKIVTVETITYPPEIGRMLRQYYMSGLDESSEDVRTLSIHLKDMLEAKIIVATID</sequence>
<name>COIL_DROME</name>
<gene>
    <name evidence="10" type="primary">coil</name>
    <name evidence="10" type="ORF">CG8710</name>
</gene>
<accession>A1Z7A8</accession>
<accession>A1Z7A9</accession>
<accession>Q8MSN4</accession>
<accession>Q95SB3</accession>
<reference evidence="11" key="1">
    <citation type="journal article" date="2000" name="Science">
        <title>The genome sequence of Drosophila melanogaster.</title>
        <authorList>
            <person name="Adams M.D."/>
            <person name="Celniker S.E."/>
            <person name="Holt R.A."/>
            <person name="Evans C.A."/>
            <person name="Gocayne J.D."/>
            <person name="Amanatides P.G."/>
            <person name="Scherer S.E."/>
            <person name="Li P.W."/>
            <person name="Hoskins R.A."/>
            <person name="Galle R.F."/>
            <person name="George R.A."/>
            <person name="Lewis S.E."/>
            <person name="Richards S."/>
            <person name="Ashburner M."/>
            <person name="Henderson S.N."/>
            <person name="Sutton G.G."/>
            <person name="Wortman J.R."/>
            <person name="Yandell M.D."/>
            <person name="Zhang Q."/>
            <person name="Chen L.X."/>
            <person name="Brandon R.C."/>
            <person name="Rogers Y.-H.C."/>
            <person name="Blazej R.G."/>
            <person name="Champe M."/>
            <person name="Pfeiffer B.D."/>
            <person name="Wan K.H."/>
            <person name="Doyle C."/>
            <person name="Baxter E.G."/>
            <person name="Helt G."/>
            <person name="Nelson C.R."/>
            <person name="Miklos G.L.G."/>
            <person name="Abril J.F."/>
            <person name="Agbayani A."/>
            <person name="An H.-J."/>
            <person name="Andrews-Pfannkoch C."/>
            <person name="Baldwin D."/>
            <person name="Ballew R.M."/>
            <person name="Basu A."/>
            <person name="Baxendale J."/>
            <person name="Bayraktaroglu L."/>
            <person name="Beasley E.M."/>
            <person name="Beeson K.Y."/>
            <person name="Benos P.V."/>
            <person name="Berman B.P."/>
            <person name="Bhandari D."/>
            <person name="Bolshakov S."/>
            <person name="Borkova D."/>
            <person name="Botchan M.R."/>
            <person name="Bouck J."/>
            <person name="Brokstein P."/>
            <person name="Brottier P."/>
            <person name="Burtis K.C."/>
            <person name="Busam D.A."/>
            <person name="Butler H."/>
            <person name="Cadieu E."/>
            <person name="Center A."/>
            <person name="Chandra I."/>
            <person name="Cherry J.M."/>
            <person name="Cawley S."/>
            <person name="Dahlke C."/>
            <person name="Davenport L.B."/>
            <person name="Davies P."/>
            <person name="de Pablos B."/>
            <person name="Delcher A."/>
            <person name="Deng Z."/>
            <person name="Mays A.D."/>
            <person name="Dew I."/>
            <person name="Dietz S.M."/>
            <person name="Dodson K."/>
            <person name="Doup L.E."/>
            <person name="Downes M."/>
            <person name="Dugan-Rocha S."/>
            <person name="Dunkov B.C."/>
            <person name="Dunn P."/>
            <person name="Durbin K.J."/>
            <person name="Evangelista C.C."/>
            <person name="Ferraz C."/>
            <person name="Ferriera S."/>
            <person name="Fleischmann W."/>
            <person name="Fosler C."/>
            <person name="Gabrielian A.E."/>
            <person name="Garg N.S."/>
            <person name="Gelbart W.M."/>
            <person name="Glasser K."/>
            <person name="Glodek A."/>
            <person name="Gong F."/>
            <person name="Gorrell J.H."/>
            <person name="Gu Z."/>
            <person name="Guan P."/>
            <person name="Harris M."/>
            <person name="Harris N.L."/>
            <person name="Harvey D.A."/>
            <person name="Heiman T.J."/>
            <person name="Hernandez J.R."/>
            <person name="Houck J."/>
            <person name="Hostin D."/>
            <person name="Houston K.A."/>
            <person name="Howland T.J."/>
            <person name="Wei M.-H."/>
            <person name="Ibegwam C."/>
            <person name="Jalali M."/>
            <person name="Kalush F."/>
            <person name="Karpen G.H."/>
            <person name="Ke Z."/>
            <person name="Kennison J.A."/>
            <person name="Ketchum K.A."/>
            <person name="Kimmel B.E."/>
            <person name="Kodira C.D."/>
            <person name="Kraft C.L."/>
            <person name="Kravitz S."/>
            <person name="Kulp D."/>
            <person name="Lai Z."/>
            <person name="Lasko P."/>
            <person name="Lei Y."/>
            <person name="Levitsky A.A."/>
            <person name="Li J.H."/>
            <person name="Li Z."/>
            <person name="Liang Y."/>
            <person name="Lin X."/>
            <person name="Liu X."/>
            <person name="Mattei B."/>
            <person name="McIntosh T.C."/>
            <person name="McLeod M.P."/>
            <person name="McPherson D."/>
            <person name="Merkulov G."/>
            <person name="Milshina N.V."/>
            <person name="Mobarry C."/>
            <person name="Morris J."/>
            <person name="Moshrefi A."/>
            <person name="Mount S.M."/>
            <person name="Moy M."/>
            <person name="Murphy B."/>
            <person name="Murphy L."/>
            <person name="Muzny D.M."/>
            <person name="Nelson D.L."/>
            <person name="Nelson D.R."/>
            <person name="Nelson K.A."/>
            <person name="Nixon K."/>
            <person name="Nusskern D.R."/>
            <person name="Pacleb J.M."/>
            <person name="Palazzolo M."/>
            <person name="Pittman G.S."/>
            <person name="Pan S."/>
            <person name="Pollard J."/>
            <person name="Puri V."/>
            <person name="Reese M.G."/>
            <person name="Reinert K."/>
            <person name="Remington K."/>
            <person name="Saunders R.D.C."/>
            <person name="Scheeler F."/>
            <person name="Shen H."/>
            <person name="Shue B.C."/>
            <person name="Siden-Kiamos I."/>
            <person name="Simpson M."/>
            <person name="Skupski M.P."/>
            <person name="Smith T.J."/>
            <person name="Spier E."/>
            <person name="Spradling A.C."/>
            <person name="Stapleton M."/>
            <person name="Strong R."/>
            <person name="Sun E."/>
            <person name="Svirskas R."/>
            <person name="Tector C."/>
            <person name="Turner R."/>
            <person name="Venter E."/>
            <person name="Wang A.H."/>
            <person name="Wang X."/>
            <person name="Wang Z.-Y."/>
            <person name="Wassarman D.A."/>
            <person name="Weinstock G.M."/>
            <person name="Weissenbach J."/>
            <person name="Williams S.M."/>
            <person name="Woodage T."/>
            <person name="Worley K.C."/>
            <person name="Wu D."/>
            <person name="Yang S."/>
            <person name="Yao Q.A."/>
            <person name="Ye J."/>
            <person name="Yeh R.-F."/>
            <person name="Zaveri J.S."/>
            <person name="Zhan M."/>
            <person name="Zhang G."/>
            <person name="Zhao Q."/>
            <person name="Zheng L."/>
            <person name="Zheng X.H."/>
            <person name="Zhong F.N."/>
            <person name="Zhong W."/>
            <person name="Zhou X."/>
            <person name="Zhu S.C."/>
            <person name="Zhu X."/>
            <person name="Smith H.O."/>
            <person name="Gibbs R.A."/>
            <person name="Myers E.W."/>
            <person name="Rubin G.M."/>
            <person name="Venter J.C."/>
        </authorList>
    </citation>
    <scope>NUCLEOTIDE SEQUENCE [LARGE SCALE GENOMIC DNA]</scope>
    <source>
        <strain evidence="11">Berkeley</strain>
    </source>
</reference>
<reference evidence="11" key="2">
    <citation type="journal article" date="2002" name="Genome Biol.">
        <title>Annotation of the Drosophila melanogaster euchromatic genome: a systematic review.</title>
        <authorList>
            <person name="Misra S."/>
            <person name="Crosby M.A."/>
            <person name="Mungall C.J."/>
            <person name="Matthews B.B."/>
            <person name="Campbell K.S."/>
            <person name="Hradecky P."/>
            <person name="Huang Y."/>
            <person name="Kaminker J.S."/>
            <person name="Millburn G.H."/>
            <person name="Prochnik S.E."/>
            <person name="Smith C.D."/>
            <person name="Tupy J.L."/>
            <person name="Whitfield E.J."/>
            <person name="Bayraktaroglu L."/>
            <person name="Berman B.P."/>
            <person name="Bettencourt B.R."/>
            <person name="Celniker S.E."/>
            <person name="de Grey A.D.N.J."/>
            <person name="Drysdale R.A."/>
            <person name="Harris N.L."/>
            <person name="Richter J."/>
            <person name="Russo S."/>
            <person name="Schroeder A.J."/>
            <person name="Shu S.Q."/>
            <person name="Stapleton M."/>
            <person name="Yamada C."/>
            <person name="Ashburner M."/>
            <person name="Gelbart W.M."/>
            <person name="Rubin G.M."/>
            <person name="Lewis S.E."/>
        </authorList>
    </citation>
    <scope>GENOME REANNOTATION</scope>
    <source>
        <strain evidence="11">Berkeley</strain>
    </source>
</reference>
<reference evidence="7 8" key="3">
    <citation type="journal article" date="2002" name="Genome Biol.">
        <title>A Drosophila full-length cDNA resource.</title>
        <authorList>
            <person name="Stapleton M."/>
            <person name="Carlson J.W."/>
            <person name="Brokstein P."/>
            <person name="Yu C."/>
            <person name="Champe M."/>
            <person name="George R.A."/>
            <person name="Guarin H."/>
            <person name="Kronmiller B."/>
            <person name="Pacleb J.M."/>
            <person name="Park S."/>
            <person name="Wan K.H."/>
            <person name="Rubin G.M."/>
            <person name="Celniker S.E."/>
        </authorList>
    </citation>
    <scope>NUCLEOTIDE SEQUENCE [LARGE SCALE MRNA]</scope>
</reference>
<reference evidence="9" key="4">
    <citation type="submission" date="2008-11" db="EMBL/GenBank/DDBJ databases">
        <authorList>
            <person name="Carlson J."/>
            <person name="Booth B."/>
            <person name="Frise E."/>
            <person name="Park S."/>
            <person name="Wan K."/>
            <person name="Yu C."/>
            <person name="Celniker S."/>
        </authorList>
    </citation>
    <scope>NUCLEOTIDE SEQUENCE [LARGE SCALE MRNA]</scope>
</reference>
<reference evidence="6" key="5">
    <citation type="journal article" date="2009" name="Mol. Biol. Cell">
        <title>Coilin is essential for Cajal body organization in Drosophila melanogaster.</title>
        <authorList>
            <person name="Liu J.L."/>
            <person name="Wu Z."/>
            <person name="Nizami Z."/>
            <person name="Deryusheva S."/>
            <person name="Rajendra T.K."/>
            <person name="Beumer K.J."/>
            <person name="Gao H."/>
            <person name="Matera A.G."/>
            <person name="Carroll D."/>
            <person name="Gall J.G."/>
        </authorList>
    </citation>
    <scope>FUNCTION</scope>
    <scope>SUBCELLULAR LOCATION</scope>
    <scope>TISSUE SPECIFICITY</scope>
    <scope>DEVELOPMENTAL STAGE</scope>
    <scope>DISRUPTION PHENOTYPE</scope>
</reference>
<reference evidence="6" key="6">
    <citation type="journal article" date="2009" name="Mol. Biol. Cell">
        <title>Small Cajal body-specific RNAs of Drosophila function in the absence of Cajal bodies.</title>
        <authorList>
            <person name="Deryusheva S."/>
            <person name="Gall J.G."/>
        </authorList>
    </citation>
    <scope>FUNCTION</scope>
    <scope>DISRUPTION PHENOTYPE</scope>
</reference>
<reference evidence="6" key="7">
    <citation type="journal article" date="2013" name="Mol. Biol. Cell">
        <title>Identification and characterization of Drosophila Snurportin reveals a role for the import receptor Moleskin/Importin7 in snRNP biogenesis.</title>
        <authorList>
            <person name="Natalizio A.H."/>
            <person name="Matera A.G."/>
        </authorList>
    </citation>
    <scope>SUBCELLULAR LOCATION</scope>
</reference>
<evidence type="ECO:0000256" key="1">
    <source>
        <dbReference type="SAM" id="MobiDB-lite"/>
    </source>
</evidence>
<evidence type="ECO:0000269" key="2">
    <source>
    </source>
</evidence>
<evidence type="ECO:0000269" key="3">
    <source>
    </source>
</evidence>
<evidence type="ECO:0000269" key="4">
    <source>
    </source>
</evidence>
<evidence type="ECO:0000303" key="5">
    <source>
    </source>
</evidence>
<evidence type="ECO:0000305" key="6"/>
<evidence type="ECO:0000312" key="7">
    <source>
        <dbReference type="EMBL" id="AAL28426.1"/>
    </source>
</evidence>
<evidence type="ECO:0000312" key="8">
    <source>
        <dbReference type="EMBL" id="AAM50550.1"/>
    </source>
</evidence>
<evidence type="ECO:0000312" key="9">
    <source>
        <dbReference type="EMBL" id="ACJ13185.1"/>
    </source>
</evidence>
<evidence type="ECO:0000312" key="10">
    <source>
        <dbReference type="FlyBase" id="FBgn0033265"/>
    </source>
</evidence>
<evidence type="ECO:0000312" key="11">
    <source>
        <dbReference type="Proteomes" id="UP000000803"/>
    </source>
</evidence>
<proteinExistence type="evidence at protein level"/>